<protein>
    <recommendedName>
        <fullName evidence="1">Protoheme IX farnesyltransferase</fullName>
        <ecNumber evidence="1">2.5.1.141</ecNumber>
    </recommendedName>
    <alternativeName>
        <fullName evidence="1">Heme B farnesyltransferase</fullName>
    </alternativeName>
    <alternativeName>
        <fullName evidence="1">Heme O synthase</fullName>
    </alternativeName>
</protein>
<accession>C6DB46</accession>
<reference key="1">
    <citation type="submission" date="2009-07" db="EMBL/GenBank/DDBJ databases">
        <title>Complete sequence of Pectobacterium carotovorum subsp. carotovorum PC1.</title>
        <authorList>
            <consortium name="US DOE Joint Genome Institute"/>
            <person name="Lucas S."/>
            <person name="Copeland A."/>
            <person name="Lapidus A."/>
            <person name="Glavina del Rio T."/>
            <person name="Tice H."/>
            <person name="Bruce D."/>
            <person name="Goodwin L."/>
            <person name="Pitluck S."/>
            <person name="Munk A.C."/>
            <person name="Brettin T."/>
            <person name="Detter J.C."/>
            <person name="Han C."/>
            <person name="Tapia R."/>
            <person name="Larimer F."/>
            <person name="Land M."/>
            <person name="Hauser L."/>
            <person name="Kyrpides N."/>
            <person name="Mikhailova N."/>
            <person name="Balakrishnan V."/>
            <person name="Glasner J."/>
            <person name="Perna N.T."/>
        </authorList>
    </citation>
    <scope>NUCLEOTIDE SEQUENCE [LARGE SCALE GENOMIC DNA]</scope>
    <source>
        <strain>PC1</strain>
    </source>
</reference>
<gene>
    <name evidence="1" type="primary">cyoE</name>
    <name type="ordered locus">PC1_1039</name>
</gene>
<comment type="function">
    <text evidence="1">Converts heme B (protoheme IX) to heme O by substitution of the vinyl group on carbon 2 of heme B porphyrin ring with a hydroxyethyl farnesyl side group.</text>
</comment>
<comment type="catalytic activity">
    <reaction evidence="1">
        <text>heme b + (2E,6E)-farnesyl diphosphate + H2O = Fe(II)-heme o + diphosphate</text>
        <dbReference type="Rhea" id="RHEA:28070"/>
        <dbReference type="ChEBI" id="CHEBI:15377"/>
        <dbReference type="ChEBI" id="CHEBI:33019"/>
        <dbReference type="ChEBI" id="CHEBI:60344"/>
        <dbReference type="ChEBI" id="CHEBI:60530"/>
        <dbReference type="ChEBI" id="CHEBI:175763"/>
        <dbReference type="EC" id="2.5.1.141"/>
    </reaction>
</comment>
<comment type="pathway">
    <text evidence="1">Porphyrin-containing compound metabolism; heme O biosynthesis; heme O from protoheme: step 1/1.</text>
</comment>
<comment type="subcellular location">
    <subcellularLocation>
        <location evidence="1">Cell inner membrane</location>
        <topology evidence="1">Multi-pass membrane protein</topology>
    </subcellularLocation>
</comment>
<comment type="miscellaneous">
    <text evidence="1">Carbon 2 of the heme B porphyrin ring is defined according to the Fischer nomenclature.</text>
</comment>
<comment type="similarity">
    <text evidence="1">Belongs to the UbiA prenyltransferase family. Protoheme IX farnesyltransferase subfamily.</text>
</comment>
<dbReference type="EC" id="2.5.1.141" evidence="1"/>
<dbReference type="EMBL" id="CP001657">
    <property type="protein sequence ID" value="ACT12088.1"/>
    <property type="molecule type" value="Genomic_DNA"/>
</dbReference>
<dbReference type="RefSeq" id="WP_005976015.1">
    <property type="nucleotide sequence ID" value="NC_012917.1"/>
</dbReference>
<dbReference type="SMR" id="C6DB46"/>
<dbReference type="STRING" id="561230.PC1_1039"/>
<dbReference type="GeneID" id="90762462"/>
<dbReference type="KEGG" id="pct:PC1_1039"/>
<dbReference type="eggNOG" id="COG0109">
    <property type="taxonomic scope" value="Bacteria"/>
</dbReference>
<dbReference type="HOGENOM" id="CLU_029631_0_0_6"/>
<dbReference type="OrthoDB" id="9814417at2"/>
<dbReference type="UniPathway" id="UPA00834">
    <property type="reaction ID" value="UER00712"/>
</dbReference>
<dbReference type="Proteomes" id="UP000002736">
    <property type="component" value="Chromosome"/>
</dbReference>
<dbReference type="GO" id="GO:0005886">
    <property type="term" value="C:plasma membrane"/>
    <property type="evidence" value="ECO:0007669"/>
    <property type="project" value="UniProtKB-SubCell"/>
</dbReference>
<dbReference type="GO" id="GO:0008495">
    <property type="term" value="F:protoheme IX farnesyltransferase activity"/>
    <property type="evidence" value="ECO:0007669"/>
    <property type="project" value="UniProtKB-UniRule"/>
</dbReference>
<dbReference type="GO" id="GO:0048034">
    <property type="term" value="P:heme O biosynthetic process"/>
    <property type="evidence" value="ECO:0007669"/>
    <property type="project" value="UniProtKB-UniRule"/>
</dbReference>
<dbReference type="CDD" id="cd13957">
    <property type="entry name" value="PT_UbiA_Cox10"/>
    <property type="match status" value="1"/>
</dbReference>
<dbReference type="FunFam" id="1.10.357.140:FF:000001">
    <property type="entry name" value="Protoheme IX farnesyltransferase"/>
    <property type="match status" value="1"/>
</dbReference>
<dbReference type="Gene3D" id="1.10.357.140">
    <property type="entry name" value="UbiA prenyltransferase"/>
    <property type="match status" value="1"/>
</dbReference>
<dbReference type="HAMAP" id="MF_00154">
    <property type="entry name" value="CyoE_CtaB"/>
    <property type="match status" value="1"/>
</dbReference>
<dbReference type="InterPro" id="IPR006369">
    <property type="entry name" value="Protohaem_IX_farnesylTrfase"/>
</dbReference>
<dbReference type="InterPro" id="IPR000537">
    <property type="entry name" value="UbiA_prenyltransferase"/>
</dbReference>
<dbReference type="InterPro" id="IPR030470">
    <property type="entry name" value="UbiA_prenylTrfase_CS"/>
</dbReference>
<dbReference type="InterPro" id="IPR044878">
    <property type="entry name" value="UbiA_sf"/>
</dbReference>
<dbReference type="NCBIfam" id="TIGR01473">
    <property type="entry name" value="cyoE_ctaB"/>
    <property type="match status" value="1"/>
</dbReference>
<dbReference type="NCBIfam" id="NF003348">
    <property type="entry name" value="PRK04375.1-1"/>
    <property type="match status" value="1"/>
</dbReference>
<dbReference type="PANTHER" id="PTHR43448">
    <property type="entry name" value="PROTOHEME IX FARNESYLTRANSFERASE, MITOCHONDRIAL"/>
    <property type="match status" value="1"/>
</dbReference>
<dbReference type="PANTHER" id="PTHR43448:SF2">
    <property type="entry name" value="PROTOHEME IX FARNESYLTRANSFERASE, MITOCHONDRIAL"/>
    <property type="match status" value="1"/>
</dbReference>
<dbReference type="Pfam" id="PF01040">
    <property type="entry name" value="UbiA"/>
    <property type="match status" value="1"/>
</dbReference>
<dbReference type="PROSITE" id="PS00943">
    <property type="entry name" value="UBIA"/>
    <property type="match status" value="1"/>
</dbReference>
<keyword id="KW-0997">Cell inner membrane</keyword>
<keyword id="KW-1003">Cell membrane</keyword>
<keyword id="KW-0350">Heme biosynthesis</keyword>
<keyword id="KW-0472">Membrane</keyword>
<keyword id="KW-0808">Transferase</keyword>
<keyword id="KW-0812">Transmembrane</keyword>
<keyword id="KW-1133">Transmembrane helix</keyword>
<proteinExistence type="inferred from homology"/>
<feature type="chain" id="PRO_1000203456" description="Protoheme IX farnesyltransferase">
    <location>
        <begin position="1"/>
        <end position="296"/>
    </location>
</feature>
<feature type="transmembrane region" description="Helical" evidence="1">
    <location>
        <begin position="11"/>
        <end position="31"/>
    </location>
</feature>
<feature type="transmembrane region" description="Helical" evidence="1">
    <location>
        <begin position="35"/>
        <end position="55"/>
    </location>
</feature>
<feature type="transmembrane region" description="Helical" evidence="1">
    <location>
        <begin position="84"/>
        <end position="104"/>
    </location>
</feature>
<feature type="transmembrane region" description="Helical" evidence="1">
    <location>
        <begin position="107"/>
        <end position="127"/>
    </location>
</feature>
<feature type="transmembrane region" description="Helical" evidence="1">
    <location>
        <begin position="132"/>
        <end position="152"/>
    </location>
</feature>
<feature type="transmembrane region" description="Helical" evidence="1">
    <location>
        <begin position="162"/>
        <end position="182"/>
    </location>
</feature>
<feature type="transmembrane region" description="Helical" evidence="1">
    <location>
        <begin position="208"/>
        <end position="228"/>
    </location>
</feature>
<feature type="transmembrane region" description="Helical" evidence="1">
    <location>
        <begin position="229"/>
        <end position="249"/>
    </location>
</feature>
<feature type="transmembrane region" description="Helical" evidence="1">
    <location>
        <begin position="264"/>
        <end position="284"/>
    </location>
</feature>
<evidence type="ECO:0000255" key="1">
    <source>
        <dbReference type="HAMAP-Rule" id="MF_00154"/>
    </source>
</evidence>
<sequence length="296" mass="32178">MIKQYLQVTKPGIIFGNLISVIGGFLLAAQGRIDYPLFLATLVGVSLVVASGCVFNNVIDRDIDKKMERTKNRVLVKGLISLKVTLVYASLLGIAGFALLYIAANPLAMWLAVMGFVVYVGVYSLYMKRHSVYGTLIGSLSGAAPPVIGYCAVSNQFDAGALILLLIFSLWQMPHSYAIAIFRFKDYQAANIPVLPVVKGISVAKNHITLYIVAFAVATLMLSLGGYAGYKYLIVAAAVSVWWLGMALSGYKNAIDDRVWARKLFVFSIVAITSLSVMMSVDSMAPAHEVLLTYLR</sequence>
<organism>
    <name type="scientific">Pectobacterium carotovorum subsp. carotovorum (strain PC1)</name>
    <dbReference type="NCBI Taxonomy" id="561230"/>
    <lineage>
        <taxon>Bacteria</taxon>
        <taxon>Pseudomonadati</taxon>
        <taxon>Pseudomonadota</taxon>
        <taxon>Gammaproteobacteria</taxon>
        <taxon>Enterobacterales</taxon>
        <taxon>Pectobacteriaceae</taxon>
        <taxon>Pectobacterium</taxon>
    </lineage>
</organism>
<name>CYOE_PECCP</name>